<feature type="chain" id="PRO_0000049757" description="Uncharacterized protein YqbF">
    <location>
        <begin position="1"/>
        <end position="103"/>
    </location>
</feature>
<feature type="strand" evidence="1">
    <location>
        <begin position="2"/>
        <end position="8"/>
    </location>
</feature>
<feature type="strand" evidence="1">
    <location>
        <begin position="10"/>
        <end position="14"/>
    </location>
</feature>
<feature type="strand" evidence="1">
    <location>
        <begin position="17"/>
        <end position="21"/>
    </location>
</feature>
<feature type="strand" evidence="1">
    <location>
        <begin position="24"/>
        <end position="27"/>
    </location>
</feature>
<feature type="helix" evidence="1">
    <location>
        <begin position="29"/>
        <end position="37"/>
    </location>
</feature>
<feature type="strand" evidence="1">
    <location>
        <begin position="41"/>
        <end position="45"/>
    </location>
</feature>
<feature type="helix" evidence="1">
    <location>
        <begin position="59"/>
        <end position="63"/>
    </location>
</feature>
<feature type="helix" evidence="1">
    <location>
        <begin position="67"/>
        <end position="77"/>
    </location>
</feature>
<feature type="helix" evidence="1">
    <location>
        <begin position="87"/>
        <end position="98"/>
    </location>
</feature>
<gene>
    <name type="primary">yqbF</name>
    <name type="ordered locus">BSU26130</name>
</gene>
<organism>
    <name type="scientific">Bacillus subtilis (strain 168)</name>
    <dbReference type="NCBI Taxonomy" id="224308"/>
    <lineage>
        <taxon>Bacteria</taxon>
        <taxon>Bacillati</taxon>
        <taxon>Bacillota</taxon>
        <taxon>Bacilli</taxon>
        <taxon>Bacillales</taxon>
        <taxon>Bacillaceae</taxon>
        <taxon>Bacillus</taxon>
    </lineage>
</organism>
<keyword id="KW-0002">3D-structure</keyword>
<keyword id="KW-1185">Reference proteome</keyword>
<proteinExistence type="evidence at protein level"/>
<accession>P45922</accession>
<name>YQBF_BACSU</name>
<sequence>MFTAKLIKGKTYNVMGITFRAGVSQTVPKKLYEYLNENPYFILTQELNNQKDDPINYTESELKGMNKAEHESIISNLGRNPSDFKNADERIAYILKQIDNKGE</sequence>
<evidence type="ECO:0007829" key="1">
    <source>
        <dbReference type="PDB" id="2HJQ"/>
    </source>
</evidence>
<reference key="1">
    <citation type="journal article" date="1995" name="Microbiology">
        <title>Complete nucleotide sequence of a skin element excised by DNA rearrangement during sporulation in Bacillus subtilis.</title>
        <authorList>
            <person name="Takemaru K."/>
            <person name="Mizuno M."/>
            <person name="Sato T."/>
            <person name="Takeuchi M."/>
            <person name="Kobayashi Y."/>
        </authorList>
    </citation>
    <scope>NUCLEOTIDE SEQUENCE [GENOMIC DNA]</scope>
    <source>
        <strain>168 / JH642</strain>
    </source>
</reference>
<reference key="2">
    <citation type="journal article" date="1996" name="Microbiology">
        <title>Systematic sequencing of the 283 kb 210 degrees-232 degrees region of the Bacillus subtilis genome containing the skin element and many sporulation genes.</title>
        <authorList>
            <person name="Mizuno M."/>
            <person name="Masuda S."/>
            <person name="Takemaru K."/>
            <person name="Hosono S."/>
            <person name="Sato T."/>
            <person name="Takeuchi M."/>
            <person name="Kobayashi Y."/>
        </authorList>
    </citation>
    <scope>NUCLEOTIDE SEQUENCE [GENOMIC DNA]</scope>
    <source>
        <strain>168 / JH642</strain>
    </source>
</reference>
<reference key="3">
    <citation type="journal article" date="1997" name="Nature">
        <title>The complete genome sequence of the Gram-positive bacterium Bacillus subtilis.</title>
        <authorList>
            <person name="Kunst F."/>
            <person name="Ogasawara N."/>
            <person name="Moszer I."/>
            <person name="Albertini A.M."/>
            <person name="Alloni G."/>
            <person name="Azevedo V."/>
            <person name="Bertero M.G."/>
            <person name="Bessieres P."/>
            <person name="Bolotin A."/>
            <person name="Borchert S."/>
            <person name="Borriss R."/>
            <person name="Boursier L."/>
            <person name="Brans A."/>
            <person name="Braun M."/>
            <person name="Brignell S.C."/>
            <person name="Bron S."/>
            <person name="Brouillet S."/>
            <person name="Bruschi C.V."/>
            <person name="Caldwell B."/>
            <person name="Capuano V."/>
            <person name="Carter N.M."/>
            <person name="Choi S.-K."/>
            <person name="Codani J.-J."/>
            <person name="Connerton I.F."/>
            <person name="Cummings N.J."/>
            <person name="Daniel R.A."/>
            <person name="Denizot F."/>
            <person name="Devine K.M."/>
            <person name="Duesterhoeft A."/>
            <person name="Ehrlich S.D."/>
            <person name="Emmerson P.T."/>
            <person name="Entian K.-D."/>
            <person name="Errington J."/>
            <person name="Fabret C."/>
            <person name="Ferrari E."/>
            <person name="Foulger D."/>
            <person name="Fritz C."/>
            <person name="Fujita M."/>
            <person name="Fujita Y."/>
            <person name="Fuma S."/>
            <person name="Galizzi A."/>
            <person name="Galleron N."/>
            <person name="Ghim S.-Y."/>
            <person name="Glaser P."/>
            <person name="Goffeau A."/>
            <person name="Golightly E.J."/>
            <person name="Grandi G."/>
            <person name="Guiseppi G."/>
            <person name="Guy B.J."/>
            <person name="Haga K."/>
            <person name="Haiech J."/>
            <person name="Harwood C.R."/>
            <person name="Henaut A."/>
            <person name="Hilbert H."/>
            <person name="Holsappel S."/>
            <person name="Hosono S."/>
            <person name="Hullo M.-F."/>
            <person name="Itaya M."/>
            <person name="Jones L.-M."/>
            <person name="Joris B."/>
            <person name="Karamata D."/>
            <person name="Kasahara Y."/>
            <person name="Klaerr-Blanchard M."/>
            <person name="Klein C."/>
            <person name="Kobayashi Y."/>
            <person name="Koetter P."/>
            <person name="Koningstein G."/>
            <person name="Krogh S."/>
            <person name="Kumano M."/>
            <person name="Kurita K."/>
            <person name="Lapidus A."/>
            <person name="Lardinois S."/>
            <person name="Lauber J."/>
            <person name="Lazarevic V."/>
            <person name="Lee S.-M."/>
            <person name="Levine A."/>
            <person name="Liu H."/>
            <person name="Masuda S."/>
            <person name="Mauel C."/>
            <person name="Medigue C."/>
            <person name="Medina N."/>
            <person name="Mellado R.P."/>
            <person name="Mizuno M."/>
            <person name="Moestl D."/>
            <person name="Nakai S."/>
            <person name="Noback M."/>
            <person name="Noone D."/>
            <person name="O'Reilly M."/>
            <person name="Ogawa K."/>
            <person name="Ogiwara A."/>
            <person name="Oudega B."/>
            <person name="Park S.-H."/>
            <person name="Parro V."/>
            <person name="Pohl T.M."/>
            <person name="Portetelle D."/>
            <person name="Porwollik S."/>
            <person name="Prescott A.M."/>
            <person name="Presecan E."/>
            <person name="Pujic P."/>
            <person name="Purnelle B."/>
            <person name="Rapoport G."/>
            <person name="Rey M."/>
            <person name="Reynolds S."/>
            <person name="Rieger M."/>
            <person name="Rivolta C."/>
            <person name="Rocha E."/>
            <person name="Roche B."/>
            <person name="Rose M."/>
            <person name="Sadaie Y."/>
            <person name="Sato T."/>
            <person name="Scanlan E."/>
            <person name="Schleich S."/>
            <person name="Schroeter R."/>
            <person name="Scoffone F."/>
            <person name="Sekiguchi J."/>
            <person name="Sekowska A."/>
            <person name="Seror S.J."/>
            <person name="Serror P."/>
            <person name="Shin B.-S."/>
            <person name="Soldo B."/>
            <person name="Sorokin A."/>
            <person name="Tacconi E."/>
            <person name="Takagi T."/>
            <person name="Takahashi H."/>
            <person name="Takemaru K."/>
            <person name="Takeuchi M."/>
            <person name="Tamakoshi A."/>
            <person name="Tanaka T."/>
            <person name="Terpstra P."/>
            <person name="Tognoni A."/>
            <person name="Tosato V."/>
            <person name="Uchiyama S."/>
            <person name="Vandenbol M."/>
            <person name="Vannier F."/>
            <person name="Vassarotti A."/>
            <person name="Viari A."/>
            <person name="Wambutt R."/>
            <person name="Wedler E."/>
            <person name="Wedler H."/>
            <person name="Weitzenegger T."/>
            <person name="Winters P."/>
            <person name="Wipat A."/>
            <person name="Yamamoto H."/>
            <person name="Yamane K."/>
            <person name="Yasumoto K."/>
            <person name="Yata K."/>
            <person name="Yoshida K."/>
            <person name="Yoshikawa H.-F."/>
            <person name="Zumstein E."/>
            <person name="Yoshikawa H."/>
            <person name="Danchin A."/>
        </authorList>
    </citation>
    <scope>NUCLEOTIDE SEQUENCE [LARGE SCALE GENOMIC DNA]</scope>
    <source>
        <strain>168</strain>
    </source>
</reference>
<reference key="4">
    <citation type="journal article" date="1995" name="Gene">
        <title>Analysis of a Bacillus subtilis genome fragment using a co-operative computer system prototype.</title>
        <authorList>
            <person name="Medigue C."/>
            <person name="Moszer I."/>
            <person name="Viari A."/>
            <person name="Danchin A."/>
        </authorList>
    </citation>
    <scope>IDENTIFICATION</scope>
</reference>
<reference key="5">
    <citation type="submission" date="2007-06" db="PDB data bank">
        <title>NMR structure of Bacillus subtilis protein yqbF, northeast structural genomics target SR449.</title>
        <authorList>
            <consortium name="Northeast structural genomics consortium (NESG)"/>
        </authorList>
    </citation>
    <scope>STRUCTURE BY NMR</scope>
</reference>
<dbReference type="EMBL" id="D32216">
    <property type="protein sequence ID" value="BAA06939.1"/>
    <property type="molecule type" value="Genomic_DNA"/>
</dbReference>
<dbReference type="EMBL" id="D84432">
    <property type="protein sequence ID" value="BAA12401.1"/>
    <property type="molecule type" value="Genomic_DNA"/>
</dbReference>
<dbReference type="EMBL" id="AL009126">
    <property type="protein sequence ID" value="CAB14554.1"/>
    <property type="molecule type" value="Genomic_DNA"/>
</dbReference>
<dbReference type="PIR" id="A69947">
    <property type="entry name" value="A69947"/>
</dbReference>
<dbReference type="RefSeq" id="NP_390490.1">
    <property type="nucleotide sequence ID" value="NC_000964.3"/>
</dbReference>
<dbReference type="RefSeq" id="WP_003229923.1">
    <property type="nucleotide sequence ID" value="NZ_OZ025638.1"/>
</dbReference>
<dbReference type="PDB" id="2HJQ">
    <property type="method" value="NMR"/>
    <property type="chains" value="A=1-103"/>
</dbReference>
<dbReference type="PDBsum" id="2HJQ"/>
<dbReference type="BMRB" id="P45922"/>
<dbReference type="SMR" id="P45922"/>
<dbReference type="FunCoup" id="P45922">
    <property type="interactions" value="190"/>
</dbReference>
<dbReference type="STRING" id="224308.BSU26130"/>
<dbReference type="PaxDb" id="224308-BSU26130"/>
<dbReference type="EnsemblBacteria" id="CAB14554">
    <property type="protein sequence ID" value="CAB14554"/>
    <property type="gene ID" value="BSU_26130"/>
</dbReference>
<dbReference type="GeneID" id="937735"/>
<dbReference type="KEGG" id="bsu:BSU26130"/>
<dbReference type="PATRIC" id="fig|224308.179.peg.2839"/>
<dbReference type="eggNOG" id="ENOG5030EPS">
    <property type="taxonomic scope" value="Bacteria"/>
</dbReference>
<dbReference type="InParanoid" id="P45922"/>
<dbReference type="OrthoDB" id="2940762at2"/>
<dbReference type="BioCyc" id="BSUB:BSU26130-MONOMER"/>
<dbReference type="EvolutionaryTrace" id="P45922"/>
<dbReference type="Proteomes" id="UP000001570">
    <property type="component" value="Chromosome"/>
</dbReference>
<dbReference type="Gene3D" id="1.10.720.10">
    <property type="match status" value="1"/>
</dbReference>
<dbReference type="Gene3D" id="3.40.5.20">
    <property type="entry name" value="YqbF domain"/>
    <property type="match status" value="1"/>
</dbReference>
<dbReference type="InterPro" id="IPR036269">
    <property type="entry name" value="Rho_N_sf"/>
</dbReference>
<dbReference type="InterPro" id="IPR036840">
    <property type="entry name" value="YqbF_dom_sf"/>
</dbReference>
<dbReference type="InterPro" id="IPR048424">
    <property type="entry name" value="YqbF_HeH"/>
</dbReference>
<dbReference type="InterPro" id="IPR027926">
    <property type="entry name" value="YqbF_N"/>
</dbReference>
<dbReference type="Pfam" id="PF14553">
    <property type="entry name" value="YqbF"/>
    <property type="match status" value="1"/>
</dbReference>
<dbReference type="Pfam" id="PF21488">
    <property type="entry name" value="YqbF_HeH"/>
    <property type="match status" value="1"/>
</dbReference>
<dbReference type="SUPFAM" id="SSF160059">
    <property type="entry name" value="PriA/YqbF domain"/>
    <property type="match status" value="1"/>
</dbReference>
<dbReference type="SUPFAM" id="SSF68912">
    <property type="entry name" value="Rho N-terminal domain-like"/>
    <property type="match status" value="1"/>
</dbReference>
<protein>
    <recommendedName>
        <fullName>Uncharacterized protein YqbF</fullName>
    </recommendedName>
</protein>